<organism>
    <name type="scientific">Pseudomonas fluorescens (strain Pf0-1)</name>
    <dbReference type="NCBI Taxonomy" id="205922"/>
    <lineage>
        <taxon>Bacteria</taxon>
        <taxon>Pseudomonadati</taxon>
        <taxon>Pseudomonadota</taxon>
        <taxon>Gammaproteobacteria</taxon>
        <taxon>Pseudomonadales</taxon>
        <taxon>Pseudomonadaceae</taxon>
        <taxon>Pseudomonas</taxon>
    </lineage>
</organism>
<accession>Q3KFA5</accession>
<gene>
    <name evidence="1" type="primary">recR</name>
    <name type="ordered locus">Pfl01_1808</name>
</gene>
<keyword id="KW-0227">DNA damage</keyword>
<keyword id="KW-0233">DNA recombination</keyword>
<keyword id="KW-0234">DNA repair</keyword>
<keyword id="KW-0479">Metal-binding</keyword>
<keyword id="KW-0862">Zinc</keyword>
<keyword id="KW-0863">Zinc-finger</keyword>
<reference key="1">
    <citation type="journal article" date="2009" name="Genome Biol.">
        <title>Genomic and genetic analyses of diversity and plant interactions of Pseudomonas fluorescens.</title>
        <authorList>
            <person name="Silby M.W."/>
            <person name="Cerdeno-Tarraga A.M."/>
            <person name="Vernikos G.S."/>
            <person name="Giddens S.R."/>
            <person name="Jackson R.W."/>
            <person name="Preston G.M."/>
            <person name="Zhang X.-X."/>
            <person name="Moon C.D."/>
            <person name="Gehrig S.M."/>
            <person name="Godfrey S.A.C."/>
            <person name="Knight C.G."/>
            <person name="Malone J.G."/>
            <person name="Robinson Z."/>
            <person name="Spiers A.J."/>
            <person name="Harris S."/>
            <person name="Challis G.L."/>
            <person name="Yaxley A.M."/>
            <person name="Harris D."/>
            <person name="Seeger K."/>
            <person name="Murphy L."/>
            <person name="Rutter S."/>
            <person name="Squares R."/>
            <person name="Quail M.A."/>
            <person name="Saunders E."/>
            <person name="Mavromatis K."/>
            <person name="Brettin T.S."/>
            <person name="Bentley S.D."/>
            <person name="Hothersall J."/>
            <person name="Stephens E."/>
            <person name="Thomas C.M."/>
            <person name="Parkhill J."/>
            <person name="Levy S.B."/>
            <person name="Rainey P.B."/>
            <person name="Thomson N.R."/>
        </authorList>
    </citation>
    <scope>NUCLEOTIDE SEQUENCE [LARGE SCALE GENOMIC DNA]</scope>
    <source>
        <strain>Pf0-1</strain>
    </source>
</reference>
<evidence type="ECO:0000255" key="1">
    <source>
        <dbReference type="HAMAP-Rule" id="MF_00017"/>
    </source>
</evidence>
<feature type="chain" id="PRO_1000001588" description="Recombination protein RecR">
    <location>
        <begin position="1"/>
        <end position="200"/>
    </location>
</feature>
<feature type="domain" description="Toprim" evidence="1">
    <location>
        <begin position="80"/>
        <end position="175"/>
    </location>
</feature>
<feature type="zinc finger region" description="C4-type" evidence="1">
    <location>
        <begin position="57"/>
        <end position="72"/>
    </location>
</feature>
<name>RECR_PSEPF</name>
<sequence>MSFSPLIRQLIDALRTLPGVGQKTAQRMALQLLERDRSGGTRLAQALSQAMEGVGHCRQCRTLTEDDLCPQCADTRRDDTLLCVVEGPMDVYAVEQTGFRGRYFVLKGHLSPLDGLGPEAIGIPQLMARIEEAGTFTEVILATNPTVEGEATAHYIAQLLQNKGLIASRIAHGVPLGGELELVDGGTLAHSFAGRKPISL</sequence>
<comment type="function">
    <text evidence="1">May play a role in DNA repair. It seems to be involved in an RecBC-independent recombinational process of DNA repair. It may act with RecF and RecO.</text>
</comment>
<comment type="similarity">
    <text evidence="1">Belongs to the RecR family.</text>
</comment>
<protein>
    <recommendedName>
        <fullName evidence="1">Recombination protein RecR</fullName>
    </recommendedName>
</protein>
<dbReference type="EMBL" id="CP000094">
    <property type="protein sequence ID" value="ABA73551.1"/>
    <property type="molecule type" value="Genomic_DNA"/>
</dbReference>
<dbReference type="RefSeq" id="WP_007951652.1">
    <property type="nucleotide sequence ID" value="NC_007492.2"/>
</dbReference>
<dbReference type="SMR" id="Q3KFA5"/>
<dbReference type="KEGG" id="pfo:Pfl01_1808"/>
<dbReference type="eggNOG" id="COG0353">
    <property type="taxonomic scope" value="Bacteria"/>
</dbReference>
<dbReference type="HOGENOM" id="CLU_060739_1_2_6"/>
<dbReference type="Proteomes" id="UP000002704">
    <property type="component" value="Chromosome"/>
</dbReference>
<dbReference type="GO" id="GO:0003677">
    <property type="term" value="F:DNA binding"/>
    <property type="evidence" value="ECO:0007669"/>
    <property type="project" value="UniProtKB-UniRule"/>
</dbReference>
<dbReference type="GO" id="GO:0008270">
    <property type="term" value="F:zinc ion binding"/>
    <property type="evidence" value="ECO:0007669"/>
    <property type="project" value="UniProtKB-KW"/>
</dbReference>
<dbReference type="GO" id="GO:0006310">
    <property type="term" value="P:DNA recombination"/>
    <property type="evidence" value="ECO:0007669"/>
    <property type="project" value="UniProtKB-UniRule"/>
</dbReference>
<dbReference type="GO" id="GO:0006281">
    <property type="term" value="P:DNA repair"/>
    <property type="evidence" value="ECO:0007669"/>
    <property type="project" value="UniProtKB-UniRule"/>
</dbReference>
<dbReference type="CDD" id="cd01025">
    <property type="entry name" value="TOPRIM_recR"/>
    <property type="match status" value="1"/>
</dbReference>
<dbReference type="Gene3D" id="3.40.1360.10">
    <property type="match status" value="1"/>
</dbReference>
<dbReference type="Gene3D" id="6.10.250.240">
    <property type="match status" value="1"/>
</dbReference>
<dbReference type="Gene3D" id="1.10.8.420">
    <property type="entry name" value="RecR Domain 1"/>
    <property type="match status" value="1"/>
</dbReference>
<dbReference type="HAMAP" id="MF_00017">
    <property type="entry name" value="RecR"/>
    <property type="match status" value="1"/>
</dbReference>
<dbReference type="InterPro" id="IPR000093">
    <property type="entry name" value="DNA_Rcmb_RecR"/>
</dbReference>
<dbReference type="InterPro" id="IPR023627">
    <property type="entry name" value="Rcmb_RecR"/>
</dbReference>
<dbReference type="InterPro" id="IPR015967">
    <property type="entry name" value="Rcmb_RecR_Znf"/>
</dbReference>
<dbReference type="InterPro" id="IPR006171">
    <property type="entry name" value="TOPRIM_dom"/>
</dbReference>
<dbReference type="InterPro" id="IPR034137">
    <property type="entry name" value="TOPRIM_RecR"/>
</dbReference>
<dbReference type="NCBIfam" id="TIGR00615">
    <property type="entry name" value="recR"/>
    <property type="match status" value="1"/>
</dbReference>
<dbReference type="PANTHER" id="PTHR30446">
    <property type="entry name" value="RECOMBINATION PROTEIN RECR"/>
    <property type="match status" value="1"/>
</dbReference>
<dbReference type="PANTHER" id="PTHR30446:SF0">
    <property type="entry name" value="RECOMBINATION PROTEIN RECR"/>
    <property type="match status" value="1"/>
</dbReference>
<dbReference type="Pfam" id="PF21175">
    <property type="entry name" value="RecR_C"/>
    <property type="match status" value="1"/>
</dbReference>
<dbReference type="Pfam" id="PF21176">
    <property type="entry name" value="RecR_HhH"/>
    <property type="match status" value="1"/>
</dbReference>
<dbReference type="Pfam" id="PF02132">
    <property type="entry name" value="RecR_ZnF"/>
    <property type="match status" value="1"/>
</dbReference>
<dbReference type="Pfam" id="PF13662">
    <property type="entry name" value="Toprim_4"/>
    <property type="match status" value="1"/>
</dbReference>
<dbReference type="SMART" id="SM00493">
    <property type="entry name" value="TOPRIM"/>
    <property type="match status" value="1"/>
</dbReference>
<dbReference type="SUPFAM" id="SSF111304">
    <property type="entry name" value="Recombination protein RecR"/>
    <property type="match status" value="1"/>
</dbReference>
<dbReference type="PROSITE" id="PS01300">
    <property type="entry name" value="RECR"/>
    <property type="match status" value="1"/>
</dbReference>
<dbReference type="PROSITE" id="PS50880">
    <property type="entry name" value="TOPRIM"/>
    <property type="match status" value="1"/>
</dbReference>
<proteinExistence type="inferred from homology"/>